<reference evidence="3" key="1">
    <citation type="journal article" date="2006" name="Mol. Plant Microbe Interact.">
        <title>Proteomic comparison of needles from blister rust-resistant and susceptible Pinus strobus seedlings reveals upregulation of putative disease resistance proteins.</title>
        <authorList>
            <person name="Smith J.A."/>
            <person name="Blanchette R.A."/>
            <person name="Burnes T.A."/>
            <person name="Jacobs J.J."/>
            <person name="Higgins L."/>
            <person name="Witthuhn B.A."/>
            <person name="David A.J."/>
            <person name="Gillman J.H."/>
        </authorList>
    </citation>
    <scope>PROTEIN SEQUENCE</scope>
    <source>
        <tissue evidence="1">Leaf</tissue>
    </source>
</reference>
<sequence>VVSLSIPR</sequence>
<protein>
    <recommendedName>
        <fullName>Putative LRR disease resistance protein/transmembrane receptor kinase PS19</fullName>
    </recommendedName>
</protein>
<comment type="miscellaneous">
    <text evidence="1">On the 2D-gel the determined pI of this protein is: 6.1, its MW is: 81.5 kDa.</text>
</comment>
<organism>
    <name type="scientific">Pinus strobus</name>
    <name type="common">Eastern white pine</name>
    <dbReference type="NCBI Taxonomy" id="3348"/>
    <lineage>
        <taxon>Eukaryota</taxon>
        <taxon>Viridiplantae</taxon>
        <taxon>Streptophyta</taxon>
        <taxon>Embryophyta</taxon>
        <taxon>Tracheophyta</taxon>
        <taxon>Spermatophyta</taxon>
        <taxon>Pinopsida</taxon>
        <taxon>Pinidae</taxon>
        <taxon>Conifers I</taxon>
        <taxon>Pinales</taxon>
        <taxon>Pinaceae</taxon>
        <taxon>Pinus</taxon>
        <taxon>Pinus subgen. Strobus</taxon>
    </lineage>
</organism>
<evidence type="ECO:0000269" key="1">
    <source>
    </source>
</evidence>
<evidence type="ECO:0000303" key="2">
    <source>
    </source>
</evidence>
<evidence type="ECO:0000305" key="3"/>
<accession>P84735</accession>
<keyword id="KW-0903">Direct protein sequencing</keyword>
<feature type="chain" id="PRO_0000240622" description="Putative LRR disease resistance protein/transmembrane receptor kinase PS19">
    <location>
        <begin position="1" status="less than"/>
        <end position="8" status="greater than"/>
    </location>
</feature>
<feature type="non-terminal residue" evidence="2">
    <location>
        <position position="1"/>
    </location>
</feature>
<feature type="non-terminal residue" evidence="2">
    <location>
        <position position="8"/>
    </location>
</feature>
<proteinExistence type="evidence at protein level"/>
<name>PS19_PINST</name>